<organismHost>
    <name type="scientific">Gallus gallus</name>
    <name type="common">Chicken</name>
    <dbReference type="NCBI Taxonomy" id="9031"/>
</organismHost>
<organismHost>
    <name type="scientific">Meleagris gallopavo</name>
    <name type="common">Wild turkey</name>
    <dbReference type="NCBI Taxonomy" id="9103"/>
</organismHost>
<dbReference type="EC" id="3.4.21.-"/>
<dbReference type="EMBL" id="M66722">
    <property type="protein sequence ID" value="AAA46239.1"/>
    <property type="molecule type" value="Genomic_RNA"/>
</dbReference>
<dbReference type="EMBL" id="U30818">
    <property type="protein sequence ID" value="AAC55351.1"/>
    <property type="molecule type" value="Genomic_RNA"/>
</dbReference>
<dbReference type="PIR" id="A40569">
    <property type="entry name" value="GNXSOH"/>
</dbReference>
<dbReference type="SMR" id="P27276"/>
<dbReference type="MEROPS" id="S50.002"/>
<dbReference type="GO" id="GO:0030430">
    <property type="term" value="C:host cell cytoplasm"/>
    <property type="evidence" value="ECO:0007669"/>
    <property type="project" value="UniProtKB-SubCell"/>
</dbReference>
<dbReference type="GO" id="GO:0039621">
    <property type="term" value="C:T=13 icosahedral viral capsid"/>
    <property type="evidence" value="ECO:0007669"/>
    <property type="project" value="UniProtKB-KW"/>
</dbReference>
<dbReference type="GO" id="GO:0046872">
    <property type="term" value="F:metal ion binding"/>
    <property type="evidence" value="ECO:0007669"/>
    <property type="project" value="UniProtKB-KW"/>
</dbReference>
<dbReference type="GO" id="GO:0008236">
    <property type="term" value="F:serine-type peptidase activity"/>
    <property type="evidence" value="ECO:0007669"/>
    <property type="project" value="UniProtKB-KW"/>
</dbReference>
<dbReference type="GO" id="GO:0005198">
    <property type="term" value="F:structural molecule activity"/>
    <property type="evidence" value="ECO:0007669"/>
    <property type="project" value="InterPro"/>
</dbReference>
<dbReference type="GO" id="GO:0006508">
    <property type="term" value="P:proteolysis"/>
    <property type="evidence" value="ECO:0007669"/>
    <property type="project" value="UniProtKB-KW"/>
</dbReference>
<dbReference type="Gene3D" id="2.60.120.20">
    <property type="match status" value="1"/>
</dbReference>
<dbReference type="Gene3D" id="6.10.250.1030">
    <property type="match status" value="1"/>
</dbReference>
<dbReference type="Gene3D" id="1.10.8.880">
    <property type="entry name" value="Birnavirus VP3 protein, domain 2"/>
    <property type="match status" value="1"/>
</dbReference>
<dbReference type="Gene3D" id="1.10.150.620">
    <property type="entry name" value="Capsid protein VP3, domain 1"/>
    <property type="match status" value="1"/>
</dbReference>
<dbReference type="Gene3D" id="2.60.120.660">
    <property type="entry name" value="icosahedral virus"/>
    <property type="match status" value="1"/>
</dbReference>
<dbReference type="InterPro" id="IPR002662">
    <property type="entry name" value="Birna_VP2"/>
</dbReference>
<dbReference type="InterPro" id="IPR002663">
    <property type="entry name" value="Birna_VP3"/>
</dbReference>
<dbReference type="InterPro" id="IPR043048">
    <property type="entry name" value="Birna_VP3_dom1"/>
</dbReference>
<dbReference type="InterPro" id="IPR043049">
    <property type="entry name" value="Birna_VP3_dom2"/>
</dbReference>
<dbReference type="InterPro" id="IPR025775">
    <property type="entry name" value="Birna_VP4_Prtase_dom"/>
</dbReference>
<dbReference type="InterPro" id="IPR029053">
    <property type="entry name" value="Viral_coat"/>
</dbReference>
<dbReference type="Pfam" id="PF01766">
    <property type="entry name" value="Birna_VP2"/>
    <property type="match status" value="1"/>
</dbReference>
<dbReference type="Pfam" id="PF01767">
    <property type="entry name" value="Birna_VP3"/>
    <property type="match status" value="1"/>
</dbReference>
<dbReference type="Pfam" id="PF01768">
    <property type="entry name" value="Birna_VP4"/>
    <property type="match status" value="1"/>
</dbReference>
<dbReference type="SUPFAM" id="SSF88633">
    <property type="entry name" value="Positive stranded ssRNA viruses"/>
    <property type="match status" value="1"/>
</dbReference>
<dbReference type="PROSITE" id="PS51548">
    <property type="entry name" value="BIRNAVIRUS_VP4_PRO"/>
    <property type="match status" value="1"/>
</dbReference>
<organism>
    <name type="scientific">Avian infectious bursal disease virus (strain OH)</name>
    <name type="common">IBDV</name>
    <name type="synonym">Gumboro disease virus</name>
    <dbReference type="NCBI Taxonomy" id="10999"/>
    <lineage>
        <taxon>Viruses</taxon>
        <taxon>Riboviria</taxon>
        <taxon>Orthornavirae</taxon>
        <taxon>Birnaviridae</taxon>
        <taxon>Avibirnavirus</taxon>
        <taxon>Avibirnavirus gumboroense</taxon>
    </lineage>
</organism>
<comment type="function">
    <text evidence="1">Capsid protein VP2 self assembles to form an icosahedral capsid with a T=13 symmetry, about 70 nm in diameter, and consisting of 260 VP2 trimers. The capsid encapsulates the genomic dsRNA. VP2 is also involved in attachment and entry into the host cell by interacting with host ITGA4/ITGB1 (By similarity).</text>
</comment>
<comment type="function">
    <text evidence="1">The precursor of VP2 plays an important role in capsid assembly. First, pre-VP2 and VP2 oligomers assemble to form a procapsid. Then, the pre-VP2 intermediates may be processed into VP2 proteins by proteolytic cleavage mediated by VP4 to obtain the mature virion. The final capsid is composed of pentamers and hexamers but VP2 has a natural tendency to assemble into all-pentameric structures. Therefore pre-VP2 may be required to allow formation of the hexameric structures (By similarity).</text>
</comment>
<comment type="function">
    <text evidence="2">Protease VP4 is a serine protease that cleaves the polyprotein into its final products. Pre-VP2 is first partially cleaved, and may be completely processed by VP4 upon capsid maturation.</text>
</comment>
<comment type="function">
    <text evidence="1">Capsid protein VP3 plays a key role in virion assembly by providing a scaffold for the capsid made of VP2. May self-assemble to form a T=4-like icosahedral inner-capsid composed of at least 180 trimers. Plays a role in genomic RNA packaging by recruiting VP1 into the capsid and interacting with the dsRNA genome segments to form a ribonucleoprotein complex. Additionally, the interaction of the VP3 C-terminal tail with VP1 removes the inherent structural blockade of the polymerase active site. Thus, VP3 can also function as a transcriptional activator (By similarity).</text>
</comment>
<comment type="function">
    <text evidence="1">Structural peptide 1 is a small peptide derived from pre-VP2 C-terminus. It destabilizes and perforates cell membranes, suggesting a role during entry (By similarity).</text>
</comment>
<comment type="function">
    <text evidence="1">Structural peptide 2 is a small peptide derived from pVP2 C-terminus. It is not essential for the virus viability, but viral growth is affected when missing (By similarity).</text>
</comment>
<comment type="function">
    <text evidence="1">Structural peptide 3 is a small peptide derived from pVP2 C-terminus. It is not essential for the virus viability, but viral growth is affected when missing (By similarity).</text>
</comment>
<comment type="function">
    <text evidence="1">Structural peptide 4 is a small peptide derived from pVP2 C-terminus. It is essential for the virus viability (By similarity).</text>
</comment>
<comment type="subunit">
    <molecule>Capsid protein VP2</molecule>
    <text evidence="1">Homotrimer. A central divalent metal stabilizes the VP2 trimer (By similarity). Interacts with host ITGA4/ITGB1.</text>
</comment>
<comment type="subunit">
    <molecule>Capsid protein VP3</molecule>
    <text evidence="1">Homodimer. Interacts (via C-terminus) with VP1 in the cytoplasm. Interacts with VP2 (By similarity).</text>
</comment>
<comment type="subcellular location">
    <molecule>Capsid protein VP2</molecule>
    <subcellularLocation>
        <location evidence="5">Virion</location>
    </subcellularLocation>
    <subcellularLocation>
        <location evidence="5">Host cytoplasm</location>
    </subcellularLocation>
</comment>
<comment type="subcellular location">
    <molecule>Capsid protein VP3</molecule>
    <subcellularLocation>
        <location evidence="5">Virion</location>
    </subcellularLocation>
    <subcellularLocation>
        <location evidence="5">Host cytoplasm</location>
    </subcellularLocation>
</comment>
<comment type="subcellular location">
    <molecule>Structural peptide 1</molecule>
    <subcellularLocation>
        <location evidence="5">Virion</location>
    </subcellularLocation>
    <subcellularLocation>
        <location evidence="5">Host cytoplasm</location>
    </subcellularLocation>
</comment>
<comment type="subcellular location">
    <molecule>Structural peptide 2</molecule>
    <subcellularLocation>
        <location evidence="5">Virion</location>
    </subcellularLocation>
    <subcellularLocation>
        <location evidence="5">Host cytoplasm</location>
    </subcellularLocation>
</comment>
<comment type="subcellular location">
    <molecule>Structural peptide 3</molecule>
    <subcellularLocation>
        <location evidence="5">Virion</location>
    </subcellularLocation>
    <subcellularLocation>
        <location evidence="5">Host cytoplasm</location>
    </subcellularLocation>
</comment>
<comment type="subcellular location">
    <molecule>Structural peptide 4</molecule>
    <subcellularLocation>
        <location evidence="5">Virion</location>
    </subcellularLocation>
    <subcellularLocation>
        <location evidence="5">Host cytoplasm</location>
    </subcellularLocation>
</comment>
<comment type="PTM">
    <text evidence="1">Specific enzymatic cleavages yield mature proteins. The capsid assembly seems to be regulated by polyprotein processing. The protease VP4 cleaves itself off the polyprotein, thus releasing pre-VP2 and VP3 within the infected cell. During capsid assembly, the C-terminus of pre-VP2 is further processed by VP4, giving rise to VP2, the external capsid protein and three small peptides that all stay closely associated with the capsid (By similarity).</text>
</comment>
<evidence type="ECO:0000250" key="1"/>
<evidence type="ECO:0000255" key="2">
    <source>
        <dbReference type="PROSITE-ProRule" id="PRU00881"/>
    </source>
</evidence>
<evidence type="ECO:0000256" key="3">
    <source>
        <dbReference type="SAM" id="MobiDB-lite"/>
    </source>
</evidence>
<evidence type="ECO:0000269" key="4">
    <source>
    </source>
</evidence>
<evidence type="ECO:0000305" key="5"/>
<proteinExistence type="evidence at protein level"/>
<feature type="chain" id="PRO_0000392592" description="Structural polyprotein">
    <location>
        <begin position="1"/>
        <end position="1012"/>
    </location>
</feature>
<feature type="chain" id="PRO_0000392593" description="Precursor of VP2">
    <location>
        <begin position="1"/>
        <end position="513"/>
    </location>
</feature>
<feature type="chain" id="PRO_0000036770" description="Capsid protein VP2">
    <location>
        <begin position="1"/>
        <end position="442"/>
    </location>
</feature>
<feature type="peptide" id="PRO_0000227841" description="Structural peptide 1" evidence="1">
    <location>
        <begin position="443"/>
        <end position="488"/>
    </location>
</feature>
<feature type="peptide" id="PRO_0000227842" description="Structural peptide 2" evidence="1">
    <location>
        <begin position="489"/>
        <end position="495"/>
    </location>
</feature>
<feature type="peptide" id="PRO_0000227843" description="Structural peptide 3" evidence="1">
    <location>
        <begin position="496"/>
        <end position="502"/>
    </location>
</feature>
<feature type="peptide" id="PRO_0000227844" description="Structural peptide 4" evidence="1">
    <location>
        <begin position="503"/>
        <end position="513"/>
    </location>
</feature>
<feature type="chain" id="PRO_0000036771" description="Protease VP4">
    <location>
        <begin position="514"/>
        <end position="755"/>
    </location>
</feature>
<feature type="chain" id="PRO_0000036772" description="Capsid protein VP3">
    <location>
        <begin position="756"/>
        <end position="1012"/>
    </location>
</feature>
<feature type="domain" description="Peptidase S50" evidence="2">
    <location>
        <begin position="514"/>
        <end position="755"/>
    </location>
</feature>
<feature type="region of interest" description="Disordered" evidence="3">
    <location>
        <begin position="972"/>
        <end position="1012"/>
    </location>
</feature>
<feature type="region of interest" description="Interaction with VP1 protein" evidence="1">
    <location>
        <begin position="1003"/>
        <end position="1012"/>
    </location>
</feature>
<feature type="compositionally biased region" description="Basic residues" evidence="3">
    <location>
        <begin position="975"/>
        <end position="986"/>
    </location>
</feature>
<feature type="active site" description="Nucleophile" evidence="2">
    <location>
        <position position="653"/>
    </location>
</feature>
<feature type="active site" evidence="2">
    <location>
        <position position="692"/>
    </location>
</feature>
<feature type="binding site" evidence="1">
    <location>
        <position position="30"/>
    </location>
    <ligand>
        <name>a divalent metal cation</name>
        <dbReference type="ChEBI" id="CHEBI:60240"/>
        <note>ligand shared between trimeric partners</note>
    </ligand>
</feature>
<feature type="site" description="Cleavage; by protease VP4" evidence="1">
    <location>
        <begin position="442"/>
        <end position="443"/>
    </location>
</feature>
<feature type="site" description="Cleavage; by protease VP4" evidence="1">
    <location>
        <begin position="488"/>
        <end position="489"/>
    </location>
</feature>
<feature type="site" description="Cleavage; by protease VP4" evidence="1">
    <location>
        <begin position="495"/>
        <end position="496"/>
    </location>
</feature>
<feature type="site" description="Cleavage; by protease VP4" evidence="1">
    <location>
        <begin position="502"/>
        <end position="503"/>
    </location>
</feature>
<feature type="site" description="Cleavage; by protease VP4" evidence="1">
    <location>
        <begin position="513"/>
        <end position="514"/>
    </location>
</feature>
<feature type="site" description="Cleavage; by protease VP4" evidence="1">
    <location>
        <begin position="755"/>
        <end position="756"/>
    </location>
</feature>
<feature type="mutagenesis site" description="Partial loss of pVP2-VP4 cleavage and complete loss of VP3-VP4 cleavage; when associated with K-497 and K-504." evidence="4">
    <original>S</original>
    <variation>K</variation>
    <location>
        <position position="490"/>
    </location>
</feature>
<feature type="mutagenesis site" description="Partial loss of pVP2-VP4 cleavage and complete loss of VP3-VP4 cleavage; when associated with K-490 and K-504." evidence="4">
    <original>S</original>
    <variation>K</variation>
    <location>
        <position position="497"/>
    </location>
</feature>
<feature type="mutagenesis site" description="Partial loss of pVP2-VP4 cleavage and complete loss of VP3-VP4 cleavage; when associated with K-490 and K-497." evidence="4">
    <original>S</original>
    <variation>K</variation>
    <location>
        <position position="504"/>
    </location>
</feature>
<feature type="mutagenesis site" description="Partial loss of polyprotein processing." evidence="4">
    <original>D</original>
    <variation>S</variation>
    <location>
        <position position="515"/>
    </location>
</feature>
<feature type="mutagenesis site" description="Almost complete loss of polyprotein processing." evidence="4">
    <original>H</original>
    <variation>P</variation>
    <location>
        <position position="547"/>
    </location>
</feature>
<feature type="mutagenesis site" description="Almost complete loss of polyprotein processing." evidence="4">
    <original>D</original>
    <variation>P</variation>
    <location>
        <position position="590"/>
    </location>
</feature>
<feature type="mutagenesis site" description="Almost complete loss of polyprotein processing." evidence="4">
    <original>S</original>
    <variation>P</variation>
    <location>
        <position position="653"/>
    </location>
</feature>
<reference key="1">
    <citation type="journal article" date="1991" name="Virology">
        <title>Genome cloning and analysis of the large RNA segment (segment A) of a naturally avirulent serotype 2 infectious bursal disease virus.</title>
        <authorList>
            <person name="Kibenge F.S.B."/>
            <person name="McKenna P.K."/>
            <person name="Dybing J.K."/>
        </authorList>
    </citation>
    <scope>NUCLEOTIDE SEQUENCE [GENOMIC RNA]</scope>
</reference>
<reference key="2">
    <citation type="journal article" date="2002" name="Virology">
        <title>Site-directed mutagenesis of Avibirnavirus VP4 gene.</title>
        <authorList>
            <person name="Rodriguez-Lecompte J.C."/>
            <person name="Kibenge F.S.B."/>
        </authorList>
    </citation>
    <scope>ACTIVE SITES OF PROTEASE VP4</scope>
    <scope>MUTAGENESIS OF SER-490; SER-497; SER-504; ASP-515; HIS-547; ASP-590 AND SER-653</scope>
</reference>
<sequence>MTNLMDHTQQIVPFIRSLLMPTTGPASIPDDTLEKHTLRSETSTYNLTVGDTGSGLIVFFPGFPGSVVGAHYTLQSSGSYQFDQMLLTAQNLPVSYNYCRLVSRSLTVRSSTLPGGVYALNGTINAVTFQGSLSELTDYSYNGLMSATANINDKIGNVLVGEGVTVLSLPTSYDLSYVRLGDPIPAAGLDPKLMATCDSSDRPRVYTVTAADEYQFSSQLIPSGVKTTLFTANIDALTSLSVGGELIFSQVTIHSIEVDVTIYFIGFDGTEVTVKAVATDFGLTTGTNNLVPFNLGGPTSEITQPITSMKLEVVTYKRGGTAGDPISWTVSGTLAVTVHGGNYPGALRPVTLVAYERVAAGSVVTVAGVSNFELIPNPELAKNLVTEYGRFDPGAMNYTKLILSERDRLGIKTVWPTREYTDFREYFMEVADLNSPLKIAGAFGFKDIIRAIRKIAVPVVSTLFPPAAPLAHANREGVDYLLGDEAQAASGTARGASGKARAASGRIRQLTLAADKGYEVVANMFQVPQNPIVDGILASPGILRGAHNLDCVSKEGATLFPVVITTLEDELTPKALNSKMFAVIEGAREDLQPPSQRGSFIRTLSGHRVYGYAPDGVLPLETGRDYTVVPIDDVWDDSIMLSQDPIPPIVGNSGNLAIAYMDVFRPKVPIHVAMTGALNASEIESVSFRSTKLATAHRLGMKLAGPGDYDINTGPNWATFIKRFPHNPRGWDRLPYLNLPYLPPTAGRQFHLALAASEFKETPELEDAVRAMDAAANADPLFRSALQVFMWLEENGIVTDMANFALSDPNAHRMKNFLANAPQAGSKSQRAKYGTAGYGVEARGPTPEEAQRAKDARISKKMETMGIYFATPEWVALNGHRGPSPGQLKYWQNTREIPEPNEDYPDYVHAEKSRLASEEQILRAATSIYGAPGQAEPPQAFIDEVARVYETNHGRVPNQEQMKDLLLTAMEMKHRNPRRAPPKPKPKPNAPSQRPPGRLGRWIRTVSDEDLE</sequence>
<name>POLS_IBDVO</name>
<keyword id="KW-0167">Capsid protein</keyword>
<keyword id="KW-1035">Host cytoplasm</keyword>
<keyword id="KW-0378">Hydrolase</keyword>
<keyword id="KW-0479">Metal-binding</keyword>
<keyword id="KW-0645">Protease</keyword>
<keyword id="KW-0720">Serine protease</keyword>
<keyword id="KW-1146">T=13 icosahedral capsid protein</keyword>
<keyword id="KW-0946">Virion</keyword>
<protein>
    <recommendedName>
        <fullName>Structural polyprotein</fullName>
        <shortName>PP</shortName>
    </recommendedName>
    <component>
        <recommendedName>
            <fullName>Precursor of VP2</fullName>
            <shortName>Pre-VP2</shortName>
        </recommendedName>
    </component>
    <component>
        <recommendedName>
            <fullName>Capsid protein VP2</fullName>
        </recommendedName>
    </component>
    <component>
        <recommendedName>
            <fullName>Structural peptide 1</fullName>
            <shortName>p1</shortName>
        </recommendedName>
        <alternativeName>
            <fullName>pep46</fullName>
        </alternativeName>
    </component>
    <component>
        <recommendedName>
            <fullName>Structural peptide 2</fullName>
            <shortName>p2</shortName>
        </recommendedName>
        <alternativeName>
            <fullName>pep7a</fullName>
        </alternativeName>
    </component>
    <component>
        <recommendedName>
            <fullName>Structural peptide 3</fullName>
            <shortName>p3</shortName>
        </recommendedName>
        <alternativeName>
            <fullName>pep7b</fullName>
        </alternativeName>
    </component>
    <component>
        <recommendedName>
            <fullName>Structural peptide 4</fullName>
            <shortName>p4</shortName>
        </recommendedName>
        <alternativeName>
            <fullName>pep11</fullName>
        </alternativeName>
    </component>
    <component>
        <recommendedName>
            <fullName>Protease VP4</fullName>
            <ecNumber>3.4.21.-</ecNumber>
        </recommendedName>
        <alternativeName>
            <fullName>Non-structural protein VP4</fullName>
            <shortName>NS</shortName>
        </alternativeName>
    </component>
    <component>
        <recommendedName>
            <fullName>Capsid protein VP3</fullName>
        </recommendedName>
    </component>
</protein>
<accession>P27276</accession>